<reference key="1">
    <citation type="journal article" date="2009" name="Stand. Genomic Sci.">
        <title>Complete genome sequence of Methanocorpusculum labreanum type strain Z.</title>
        <authorList>
            <person name="Anderson I.J."/>
            <person name="Sieprawska-Lupa M."/>
            <person name="Goltsman E."/>
            <person name="Lapidus A."/>
            <person name="Copeland A."/>
            <person name="Glavina Del Rio T."/>
            <person name="Tice H."/>
            <person name="Dalin E."/>
            <person name="Barry K."/>
            <person name="Pitluck S."/>
            <person name="Hauser L."/>
            <person name="Land M."/>
            <person name="Lucas S."/>
            <person name="Richardson P."/>
            <person name="Whitman W.B."/>
            <person name="Kyrpides N.C."/>
        </authorList>
    </citation>
    <scope>NUCLEOTIDE SEQUENCE [LARGE SCALE GENOMIC DNA]</scope>
    <source>
        <strain>ATCC 43576 / DSM 4855 / Z</strain>
    </source>
</reference>
<name>Y1307_METLZ</name>
<evidence type="ECO:0000255" key="1">
    <source>
        <dbReference type="HAMAP-Rule" id="MF_00498"/>
    </source>
</evidence>
<protein>
    <recommendedName>
        <fullName evidence="1">UPF0179 protein Mlab_1307</fullName>
    </recommendedName>
</protein>
<keyword id="KW-1185">Reference proteome</keyword>
<sequence length="152" mass="16657">MDKEETIVTIVGSVLAHEGAEFVYAGKAAECESCKVAKVCHNAKLREGKRYRVVSVRKTKHDCAVHEGGAKAVEVAETIITAVIPTSQATRRTRITYTPVCDDVFCKGYAFCHPDGLTEKGRYVVLEVLGPYSECPKGTKNLKLVEMRPVPT</sequence>
<gene>
    <name type="ordered locus">Mlab_1307</name>
</gene>
<organism>
    <name type="scientific">Methanocorpusculum labreanum (strain ATCC 43576 / DSM 4855 / Z)</name>
    <dbReference type="NCBI Taxonomy" id="410358"/>
    <lineage>
        <taxon>Archaea</taxon>
        <taxon>Methanobacteriati</taxon>
        <taxon>Methanobacteriota</taxon>
        <taxon>Stenosarchaea group</taxon>
        <taxon>Methanomicrobia</taxon>
        <taxon>Methanomicrobiales</taxon>
        <taxon>Methanocorpusculaceae</taxon>
        <taxon>Methanocorpusculum</taxon>
    </lineage>
</organism>
<accession>A2ST18</accession>
<proteinExistence type="inferred from homology"/>
<dbReference type="EMBL" id="CP000559">
    <property type="protein sequence ID" value="ABN07474.1"/>
    <property type="molecule type" value="Genomic_DNA"/>
</dbReference>
<dbReference type="RefSeq" id="WP_011833677.1">
    <property type="nucleotide sequence ID" value="NC_008942.1"/>
</dbReference>
<dbReference type="STRING" id="410358.Mlab_1307"/>
<dbReference type="GeneID" id="4794730"/>
<dbReference type="KEGG" id="mla:Mlab_1307"/>
<dbReference type="eggNOG" id="arCOG04477">
    <property type="taxonomic scope" value="Archaea"/>
</dbReference>
<dbReference type="HOGENOM" id="CLU_121764_0_0_2"/>
<dbReference type="OrthoDB" id="24613at2157"/>
<dbReference type="Proteomes" id="UP000000365">
    <property type="component" value="Chromosome"/>
</dbReference>
<dbReference type="HAMAP" id="MF_00498">
    <property type="entry name" value="UPF0179"/>
    <property type="match status" value="1"/>
</dbReference>
<dbReference type="InterPro" id="IPR005369">
    <property type="entry name" value="UPF0179"/>
</dbReference>
<dbReference type="PANTHER" id="PTHR40699">
    <property type="entry name" value="UPF0179 PROTEIN MJ1627"/>
    <property type="match status" value="1"/>
</dbReference>
<dbReference type="PANTHER" id="PTHR40699:SF1">
    <property type="entry name" value="UPF0179 PROTEIN MJ1627"/>
    <property type="match status" value="1"/>
</dbReference>
<dbReference type="Pfam" id="PF03684">
    <property type="entry name" value="UPF0179"/>
    <property type="match status" value="1"/>
</dbReference>
<feature type="chain" id="PRO_0000378124" description="UPF0179 protein Mlab_1307">
    <location>
        <begin position="1"/>
        <end position="152"/>
    </location>
</feature>
<comment type="similarity">
    <text evidence="1">Belongs to the UPF0179 family.</text>
</comment>